<feature type="chain" id="PRO_0000247663" description="Taste receptor type 2 member 136">
    <location>
        <begin position="1"/>
        <end position="330"/>
    </location>
</feature>
<feature type="topological domain" description="Extracellular" evidence="2">
    <location>
        <begin position="1"/>
        <end position="32"/>
    </location>
</feature>
<feature type="transmembrane region" description="Helical; Name=1" evidence="2">
    <location>
        <begin position="33"/>
        <end position="53"/>
    </location>
</feature>
<feature type="topological domain" description="Cytoplasmic" evidence="2">
    <location>
        <begin position="54"/>
        <end position="73"/>
    </location>
</feature>
<feature type="transmembrane region" description="Helical; Name=2" evidence="2">
    <location>
        <begin position="74"/>
        <end position="94"/>
    </location>
</feature>
<feature type="topological domain" description="Extracellular" evidence="2">
    <location>
        <begin position="95"/>
        <end position="122"/>
    </location>
</feature>
<feature type="transmembrane region" description="Helical; Name=3" evidence="2">
    <location>
        <begin position="123"/>
        <end position="143"/>
    </location>
</feature>
<feature type="topological domain" description="Cytoplasmic" evidence="2">
    <location>
        <begin position="144"/>
        <end position="149"/>
    </location>
</feature>
<feature type="transmembrane region" description="Helical; Name=4" evidence="2">
    <location>
        <begin position="150"/>
        <end position="170"/>
    </location>
</feature>
<feature type="topological domain" description="Extracellular" evidence="2">
    <location>
        <begin position="171"/>
        <end position="201"/>
    </location>
</feature>
<feature type="transmembrane region" description="Helical; Name=5" evidence="2">
    <location>
        <begin position="202"/>
        <end position="222"/>
    </location>
</feature>
<feature type="topological domain" description="Cytoplasmic" evidence="2">
    <location>
        <begin position="223"/>
        <end position="248"/>
    </location>
</feature>
<feature type="transmembrane region" description="Helical; Name=6" evidence="2">
    <location>
        <begin position="249"/>
        <end position="269"/>
    </location>
</feature>
<feature type="topological domain" description="Extracellular" evidence="2">
    <location>
        <begin position="270"/>
        <end position="283"/>
    </location>
</feature>
<feature type="transmembrane region" description="Helical; Name=7" evidence="2">
    <location>
        <begin position="284"/>
        <end position="304"/>
    </location>
</feature>
<feature type="topological domain" description="Cytoplasmic" evidence="2">
    <location>
        <begin position="305"/>
        <end position="330"/>
    </location>
</feature>
<feature type="glycosylation site" description="N-linked (GlcNAc...) asparagine" evidence="2">
    <location>
        <position position="183"/>
    </location>
</feature>
<feature type="glycosylation site" description="N-linked (GlcNAc...) asparagine" evidence="2">
    <location>
        <position position="195"/>
    </location>
</feature>
<proteinExistence type="inferred from homology"/>
<accession>Q675B7</accession>
<dbReference type="EMBL" id="AY486340">
    <property type="protein sequence ID" value="AAS57911.1"/>
    <property type="molecule type" value="Genomic_DNA"/>
</dbReference>
<dbReference type="RefSeq" id="NP_001160150.1">
    <property type="nucleotide sequence ID" value="NM_001166678.1"/>
</dbReference>
<dbReference type="SMR" id="Q675B7"/>
<dbReference type="FunCoup" id="Q675B7">
    <property type="interactions" value="117"/>
</dbReference>
<dbReference type="STRING" id="10116.ENSRNOP00000048980"/>
<dbReference type="GlyCosmos" id="Q675B7">
    <property type="glycosylation" value="2 sites, No reported glycans"/>
</dbReference>
<dbReference type="GlyGen" id="Q675B7">
    <property type="glycosylation" value="2 sites"/>
</dbReference>
<dbReference type="PhosphoSitePlus" id="Q675B7"/>
<dbReference type="PaxDb" id="10116-ENSRNOP00000048980"/>
<dbReference type="Ensembl" id="ENSRNOT00000052034.2">
    <property type="protein sequence ID" value="ENSRNOP00000048980.1"/>
    <property type="gene ID" value="ENSRNOG00000029561.2"/>
</dbReference>
<dbReference type="GeneID" id="100310876"/>
<dbReference type="KEGG" id="rno:100310876"/>
<dbReference type="UCSC" id="RGD:2314262">
    <property type="organism name" value="rat"/>
</dbReference>
<dbReference type="AGR" id="RGD:2314262"/>
<dbReference type="CTD" id="353165"/>
<dbReference type="RGD" id="2314262">
    <property type="gene designation" value="Tas2r136"/>
</dbReference>
<dbReference type="eggNOG" id="ENOG502TE6U">
    <property type="taxonomic scope" value="Eukaryota"/>
</dbReference>
<dbReference type="GeneTree" id="ENSGT01100000263477"/>
<dbReference type="HOGENOM" id="CLU_072337_2_0_1"/>
<dbReference type="InParanoid" id="Q675B7"/>
<dbReference type="OMA" id="YERNITQ"/>
<dbReference type="OrthoDB" id="8876749at2759"/>
<dbReference type="PhylomeDB" id="Q675B7"/>
<dbReference type="TreeFam" id="TF335891"/>
<dbReference type="Reactome" id="R-RNO-418594">
    <property type="pathway name" value="G alpha (i) signalling events"/>
</dbReference>
<dbReference type="Reactome" id="R-RNO-420499">
    <property type="pathway name" value="Class C/3 (Metabotropic glutamate/pheromone receptors)"/>
</dbReference>
<dbReference type="Reactome" id="R-RNO-9717207">
    <property type="pathway name" value="Sensory perception of sweet, bitter, and umami (glutamate) taste"/>
</dbReference>
<dbReference type="PRO" id="PR:Q675B7"/>
<dbReference type="Proteomes" id="UP000002494">
    <property type="component" value="Chromosome 4"/>
</dbReference>
<dbReference type="GO" id="GO:0016020">
    <property type="term" value="C:membrane"/>
    <property type="evidence" value="ECO:0000318"/>
    <property type="project" value="GO_Central"/>
</dbReference>
<dbReference type="GO" id="GO:0033038">
    <property type="term" value="F:bitter taste receptor activity"/>
    <property type="evidence" value="ECO:0000266"/>
    <property type="project" value="RGD"/>
</dbReference>
<dbReference type="GO" id="GO:0004930">
    <property type="term" value="F:G protein-coupled receptor activity"/>
    <property type="evidence" value="ECO:0007669"/>
    <property type="project" value="UniProtKB-KW"/>
</dbReference>
<dbReference type="GO" id="GO:0001580">
    <property type="term" value="P:detection of chemical stimulus involved in sensory perception of bitter taste"/>
    <property type="evidence" value="ECO:0000266"/>
    <property type="project" value="RGD"/>
</dbReference>
<dbReference type="CDD" id="cd15027">
    <property type="entry name" value="7tm_TAS2R43-like"/>
    <property type="match status" value="1"/>
</dbReference>
<dbReference type="FunFam" id="1.20.1070.10:FF:000055">
    <property type="entry name" value="Taste receptor type 2"/>
    <property type="match status" value="1"/>
</dbReference>
<dbReference type="Gene3D" id="1.20.1070.10">
    <property type="entry name" value="Rhodopsin 7-helix transmembrane proteins"/>
    <property type="match status" value="1"/>
</dbReference>
<dbReference type="InterPro" id="IPR007960">
    <property type="entry name" value="TAS2R"/>
</dbReference>
<dbReference type="PANTHER" id="PTHR11394">
    <property type="entry name" value="TASTE RECEPTOR TYPE 2"/>
    <property type="match status" value="1"/>
</dbReference>
<dbReference type="PANTHER" id="PTHR11394:SF81">
    <property type="entry name" value="TASTE RECEPTOR TYPE 2 MEMBER 136"/>
    <property type="match status" value="1"/>
</dbReference>
<dbReference type="Pfam" id="PF05296">
    <property type="entry name" value="TAS2R"/>
    <property type="match status" value="1"/>
</dbReference>
<dbReference type="SUPFAM" id="SSF81321">
    <property type="entry name" value="Family A G protein-coupled receptor-like"/>
    <property type="match status" value="1"/>
</dbReference>
<name>TR136_RAT</name>
<gene>
    <name evidence="1" type="primary">Tas2r136</name>
    <name type="synonym">Tas2r40</name>
</gene>
<protein>
    <recommendedName>
        <fullName>Taste receptor type 2 member 136</fullName>
        <shortName>T2R136</shortName>
    </recommendedName>
    <alternativeName>
        <fullName>Taste receptor type 2 member 40</fullName>
        <shortName>T2R40</shortName>
    </alternativeName>
</protein>
<organism>
    <name type="scientific">Rattus norvegicus</name>
    <name type="common">Rat</name>
    <dbReference type="NCBI Taxonomy" id="10116"/>
    <lineage>
        <taxon>Eukaryota</taxon>
        <taxon>Metazoa</taxon>
        <taxon>Chordata</taxon>
        <taxon>Craniata</taxon>
        <taxon>Vertebrata</taxon>
        <taxon>Euteleostomi</taxon>
        <taxon>Mammalia</taxon>
        <taxon>Eutheria</taxon>
        <taxon>Euarchontoglires</taxon>
        <taxon>Glires</taxon>
        <taxon>Rodentia</taxon>
        <taxon>Myomorpha</taxon>
        <taxon>Muroidea</taxon>
        <taxon>Muridae</taxon>
        <taxon>Murinae</taxon>
        <taxon>Rattus</taxon>
    </lineage>
</organism>
<comment type="function">
    <text evidence="3">Putative taste receptor which may play a role in the perception of bitterness.</text>
</comment>
<comment type="subcellular location">
    <subcellularLocation>
        <location evidence="3">Membrane</location>
        <topology evidence="3">Multi-pass membrane protein</topology>
    </subcellularLocation>
</comment>
<comment type="miscellaneous">
    <text evidence="3">Several bitter taste receptors are expressed in a single taste receptor cell.</text>
</comment>
<comment type="similarity">
    <text evidence="2">Belongs to the G-protein coupled receptor T2R family.</text>
</comment>
<sequence length="330" mass="37358">MKSQPVTQELHFIFPLFKTISSDIMSFLVSIAGIAMLAQIVLGTFANVFIVLVTCTDCIRRRKLFLADGILTSLAFCRIGMLWVILISWCSIVFHQALSLQVRFSICVGWAVTNHFNMWLATILSILYLLKIGNFSNLIFLGLKRKIKSVFIVVLLASLVLLFPNLITVTVCETVQANGYRGNLTGKTKRTYFMNLTAMISFTLDNIISFTISMVCFLLLIYSLCKHLRTMRLYGKGPHNPSASAHIKALQAVISFLLLFSMFILSLIISGYNYMKPLNEPVHLICQLIGTLYPSSHSYVLLWGNRRIKLAFVLAMVQVRARLWLKEEKP</sequence>
<reference evidence="4" key="1">
    <citation type="submission" date="2003-11" db="EMBL/GenBank/DDBJ databases">
        <title>Identification of new putative rat taste receptors belonging to the T2R family.</title>
        <authorList>
            <person name="Conte C."/>
            <person name="Ebeling M."/>
            <person name="Marcuz A."/>
            <person name="Andres-Barquin P.J."/>
        </authorList>
    </citation>
    <scope>NUCLEOTIDE SEQUENCE [GENOMIC DNA]</scope>
    <source>
        <strain evidence="4">Sprague-Dawley</strain>
    </source>
</reference>
<keyword id="KW-0297">G-protein coupled receptor</keyword>
<keyword id="KW-0325">Glycoprotein</keyword>
<keyword id="KW-0472">Membrane</keyword>
<keyword id="KW-0675">Receptor</keyword>
<keyword id="KW-1185">Reference proteome</keyword>
<keyword id="KW-0716">Sensory transduction</keyword>
<keyword id="KW-0919">Taste</keyword>
<keyword id="KW-0807">Transducer</keyword>
<keyword id="KW-0812">Transmembrane</keyword>
<keyword id="KW-1133">Transmembrane helix</keyword>
<evidence type="ECO:0000250" key="1">
    <source>
        <dbReference type="UniProtKB" id="Q7TQA8"/>
    </source>
</evidence>
<evidence type="ECO:0000255" key="2"/>
<evidence type="ECO:0000305" key="3"/>
<evidence type="ECO:0000312" key="4">
    <source>
        <dbReference type="EMBL" id="AAS57911.1"/>
    </source>
</evidence>